<name>COQ4_EREGS</name>
<sequence>MLRGKATVAAAQPRRTFVLAGMLSLGQLVIGREARLADAMARGDLHNKNEDYQAKQLQELEARLQGLRNTRPSAPRYEGHVPLWWHEKALLFGISGLRSFFHPENGMNIVQLGEAAAIPCFLESLRRTMLSDATGRRILREQPNISEPDLDMDKLAQLPTNTLGHTFYRWLRKEGVTPDTRAPVTYIDDPVHAYIFKRYRQCHDFYHAITGLPIIIEGEIAVKALEAANIGVPMAALGALLAPLRLRAAQRERLRNIYLPWAIETGLSAKPLINVYWEELLEHDVDQLRAELGIRVPPDLRLIRQEQLQRRRSFKMKYESFEN</sequence>
<feature type="chain" id="PRO_0000388093" description="Ubiquinone biosynthesis protein COQ4, mitochondrial">
    <location>
        <begin position="1"/>
        <end position="323"/>
    </location>
</feature>
<feature type="binding site" evidence="1">
    <location>
        <position position="203"/>
    </location>
    <ligand>
        <name>Zn(2+)</name>
        <dbReference type="ChEBI" id="CHEBI:29105"/>
    </ligand>
</feature>
<feature type="binding site" evidence="1">
    <location>
        <position position="204"/>
    </location>
    <ligand>
        <name>Zn(2+)</name>
        <dbReference type="ChEBI" id="CHEBI:29105"/>
    </ligand>
</feature>
<feature type="binding site" evidence="1">
    <location>
        <position position="207"/>
    </location>
    <ligand>
        <name>Zn(2+)</name>
        <dbReference type="ChEBI" id="CHEBI:29105"/>
    </ligand>
</feature>
<feature type="binding site" evidence="1">
    <location>
        <position position="219"/>
    </location>
    <ligand>
        <name>Zn(2+)</name>
        <dbReference type="ChEBI" id="CHEBI:29105"/>
    </ligand>
</feature>
<accession>Q751B5</accession>
<reference key="1">
    <citation type="journal article" date="2004" name="Science">
        <title>The Ashbya gossypii genome as a tool for mapping the ancient Saccharomyces cerevisiae genome.</title>
        <authorList>
            <person name="Dietrich F.S."/>
            <person name="Voegeli S."/>
            <person name="Brachat S."/>
            <person name="Lerch A."/>
            <person name="Gates K."/>
            <person name="Steiner S."/>
            <person name="Mohr C."/>
            <person name="Poehlmann R."/>
            <person name="Luedi P."/>
            <person name="Choi S."/>
            <person name="Wing R.A."/>
            <person name="Flavier A."/>
            <person name="Gaffney T.D."/>
            <person name="Philippsen P."/>
        </authorList>
    </citation>
    <scope>NUCLEOTIDE SEQUENCE [LARGE SCALE GENOMIC DNA]</scope>
    <source>
        <strain>ATCC 10895 / CBS 109.51 / FGSC 9923 / NRRL Y-1056</strain>
    </source>
</reference>
<reference key="2">
    <citation type="journal article" date="2013" name="G3 (Bethesda)">
        <title>Genomes of Ashbya fungi isolated from insects reveal four mating-type loci, numerous translocations, lack of transposons, and distinct gene duplications.</title>
        <authorList>
            <person name="Dietrich F.S."/>
            <person name="Voegeli S."/>
            <person name="Kuo S."/>
            <person name="Philippsen P."/>
        </authorList>
    </citation>
    <scope>GENOME REANNOTATION</scope>
    <source>
        <strain>ATCC 10895 / CBS 109.51 / FGSC 9923 / NRRL Y-1056</strain>
    </source>
</reference>
<protein>
    <recommendedName>
        <fullName evidence="1">Ubiquinone biosynthesis protein COQ4, mitochondrial</fullName>
    </recommendedName>
    <alternativeName>
        <fullName>4-hydroxy-3-methoxy-5-polyprenylbenzoate decarboxylase</fullName>
        <ecNumber evidence="1">4.1.1.130</ecNumber>
    </alternativeName>
    <alternativeName>
        <fullName evidence="1">Coenzyme Q biosynthesis protein 4</fullName>
    </alternativeName>
</protein>
<evidence type="ECO:0000255" key="1">
    <source>
        <dbReference type="HAMAP-Rule" id="MF_03111"/>
    </source>
</evidence>
<proteinExistence type="inferred from homology"/>
<keyword id="KW-0456">Lyase</keyword>
<keyword id="KW-0472">Membrane</keyword>
<keyword id="KW-0479">Metal-binding</keyword>
<keyword id="KW-0496">Mitochondrion</keyword>
<keyword id="KW-0999">Mitochondrion inner membrane</keyword>
<keyword id="KW-1185">Reference proteome</keyword>
<keyword id="KW-0831">Ubiquinone biosynthesis</keyword>
<keyword id="KW-0862">Zinc</keyword>
<gene>
    <name evidence="1" type="primary">COQ4</name>
    <name type="ordered locus">AGL103W</name>
</gene>
<comment type="function">
    <text evidence="1">Lyase that catalyzes the C1-decarboxylation of 4-hydroxy-3-methoxy-5-(all-trans-polyprenyl)benzoic acid into 2-methoxy-6-(all-trans-polyprenyl)phenol during ubiquinone biosynthesis.</text>
</comment>
<comment type="catalytic activity">
    <reaction evidence="1">
        <text>a 4-hydroxy-3-methoxy-5-(all-trans-polyprenyl)benzoate + H(+) = a 2-methoxy-6-(all-trans-polyprenyl)phenol + CO2</text>
        <dbReference type="Rhea" id="RHEA:81179"/>
        <dbReference type="Rhea" id="RHEA-COMP:9551"/>
        <dbReference type="Rhea" id="RHEA-COMP:10931"/>
        <dbReference type="ChEBI" id="CHEBI:15378"/>
        <dbReference type="ChEBI" id="CHEBI:16526"/>
        <dbReference type="ChEBI" id="CHEBI:62731"/>
        <dbReference type="ChEBI" id="CHEBI:84443"/>
        <dbReference type="EC" id="4.1.1.130"/>
    </reaction>
</comment>
<comment type="cofactor">
    <cofactor evidence="1">
        <name>Zn(2+)</name>
        <dbReference type="ChEBI" id="CHEBI:29105"/>
    </cofactor>
</comment>
<comment type="pathway">
    <text evidence="1">Cofactor biosynthesis; ubiquinone biosynthesis.</text>
</comment>
<comment type="subunit">
    <text evidence="1">Component of a multi-subunit COQ enzyme complex, composed of at least COQ3, COQ4, COQ5, COQ6, COQ7 and COQ9.</text>
</comment>
<comment type="subcellular location">
    <subcellularLocation>
        <location evidence="1">Mitochondrion inner membrane</location>
        <topology evidence="1">Peripheral membrane protein</topology>
        <orientation evidence="1">Matrix side</orientation>
    </subcellularLocation>
</comment>
<comment type="miscellaneous">
    <text evidence="1">This protein may be expected to contain an N-terminal transit peptide but none has been predicted.</text>
</comment>
<comment type="similarity">
    <text evidence="1">Belongs to the COQ4 family.</text>
</comment>
<dbReference type="EC" id="4.1.1.130" evidence="1"/>
<dbReference type="EMBL" id="AE016820">
    <property type="protein sequence ID" value="AAS54388.1"/>
    <property type="molecule type" value="Genomic_DNA"/>
</dbReference>
<dbReference type="RefSeq" id="NP_986564.1">
    <property type="nucleotide sequence ID" value="NM_211626.1"/>
</dbReference>
<dbReference type="SMR" id="Q751B5"/>
<dbReference type="FunCoup" id="Q751B5">
    <property type="interactions" value="544"/>
</dbReference>
<dbReference type="STRING" id="284811.Q751B5"/>
<dbReference type="EnsemblFungi" id="AAS54388">
    <property type="protein sequence ID" value="AAS54388"/>
    <property type="gene ID" value="AGOS_AGL103W"/>
</dbReference>
<dbReference type="GeneID" id="4622863"/>
<dbReference type="KEGG" id="ago:AGOS_AGL103W"/>
<dbReference type="eggNOG" id="KOG3244">
    <property type="taxonomic scope" value="Eukaryota"/>
</dbReference>
<dbReference type="HOGENOM" id="CLU_061241_0_2_1"/>
<dbReference type="InParanoid" id="Q751B5"/>
<dbReference type="OMA" id="YYERHFH"/>
<dbReference type="OrthoDB" id="4249at2759"/>
<dbReference type="UniPathway" id="UPA00232"/>
<dbReference type="Proteomes" id="UP000000591">
    <property type="component" value="Chromosome VII"/>
</dbReference>
<dbReference type="GO" id="GO:0031314">
    <property type="term" value="C:extrinsic component of mitochondrial inner membrane"/>
    <property type="evidence" value="ECO:0007669"/>
    <property type="project" value="UniProtKB-UniRule"/>
</dbReference>
<dbReference type="GO" id="GO:0005739">
    <property type="term" value="C:mitochondrion"/>
    <property type="evidence" value="ECO:0000318"/>
    <property type="project" value="GO_Central"/>
</dbReference>
<dbReference type="GO" id="GO:0006744">
    <property type="term" value="P:ubiquinone biosynthetic process"/>
    <property type="evidence" value="ECO:0007669"/>
    <property type="project" value="UniProtKB-UniRule"/>
</dbReference>
<dbReference type="HAMAP" id="MF_03111">
    <property type="entry name" value="Coq4"/>
    <property type="match status" value="1"/>
</dbReference>
<dbReference type="InterPro" id="IPR007715">
    <property type="entry name" value="Coq4"/>
</dbReference>
<dbReference type="InterPro" id="IPR027540">
    <property type="entry name" value="Coq4_euk"/>
</dbReference>
<dbReference type="PANTHER" id="PTHR12922">
    <property type="entry name" value="UBIQUINONE BIOSYNTHESIS PROTEIN"/>
    <property type="match status" value="1"/>
</dbReference>
<dbReference type="PANTHER" id="PTHR12922:SF7">
    <property type="entry name" value="UBIQUINONE BIOSYNTHESIS PROTEIN COQ4 HOMOLOG, MITOCHONDRIAL"/>
    <property type="match status" value="1"/>
</dbReference>
<dbReference type="Pfam" id="PF05019">
    <property type="entry name" value="Coq4"/>
    <property type="match status" value="1"/>
</dbReference>
<organism>
    <name type="scientific">Eremothecium gossypii (strain ATCC 10895 / CBS 109.51 / FGSC 9923 / NRRL Y-1056)</name>
    <name type="common">Yeast</name>
    <name type="synonym">Ashbya gossypii</name>
    <dbReference type="NCBI Taxonomy" id="284811"/>
    <lineage>
        <taxon>Eukaryota</taxon>
        <taxon>Fungi</taxon>
        <taxon>Dikarya</taxon>
        <taxon>Ascomycota</taxon>
        <taxon>Saccharomycotina</taxon>
        <taxon>Saccharomycetes</taxon>
        <taxon>Saccharomycetales</taxon>
        <taxon>Saccharomycetaceae</taxon>
        <taxon>Eremothecium</taxon>
    </lineage>
</organism>